<gene>
    <name type="primary">HXK1</name>
    <name type="ordered locus">Os07g0446800</name>
    <name type="ordered locus">LOC_Os07g26540</name>
    <name type="ORF">P0030H06.133</name>
    <name type="ORF">P0475E07.113</name>
</gene>
<organism>
    <name type="scientific">Oryza sativa subsp. japonica</name>
    <name type="common">Rice</name>
    <dbReference type="NCBI Taxonomy" id="39947"/>
    <lineage>
        <taxon>Eukaryota</taxon>
        <taxon>Viridiplantae</taxon>
        <taxon>Streptophyta</taxon>
        <taxon>Embryophyta</taxon>
        <taxon>Tracheophyta</taxon>
        <taxon>Spermatophyta</taxon>
        <taxon>Magnoliopsida</taxon>
        <taxon>Liliopsida</taxon>
        <taxon>Poales</taxon>
        <taxon>Poaceae</taxon>
        <taxon>BOP clade</taxon>
        <taxon>Oryzoideae</taxon>
        <taxon>Oryzeae</taxon>
        <taxon>Oryzinae</taxon>
        <taxon>Oryza</taxon>
        <taxon>Oryza sativa</taxon>
    </lineage>
</organism>
<accession>Q8LH82</accession>
<accession>Q0D6S1</accession>
<reference key="1">
    <citation type="journal article" date="2006" name="Planta">
        <title>Structure, expression, and functional analysis of the hexokinase gene family in rice (Oryza sativa L.).</title>
        <authorList>
            <person name="Cho J.-I."/>
            <person name="Ryoo N."/>
            <person name="Ko S."/>
            <person name="Lee S.-K."/>
            <person name="Lee J."/>
            <person name="Jung K.-H."/>
            <person name="Lee Y.-H."/>
            <person name="Bhoo S.H."/>
            <person name="Winderickx J."/>
            <person name="An G."/>
            <person name="Hahn T.-R."/>
            <person name="Jeon J.-S."/>
        </authorList>
    </citation>
    <scope>NUCLEOTIDE SEQUENCE [MRNA]</scope>
    <scope>FUNCTION</scope>
    <scope>CATALYTIC ACTIVITY</scope>
    <scope>NOMENCLATURE</scope>
    <source>
        <strain>cv. Jinmi</strain>
    </source>
</reference>
<reference key="2">
    <citation type="submission" date="2005-01" db="EMBL/GenBank/DDBJ databases">
        <title>The hexokinase gene family in rice.</title>
        <authorList>
            <person name="Wang Y.D."/>
            <person name="Cheng W."/>
            <person name="Wang X.S."/>
            <person name="Zhou X.J."/>
        </authorList>
    </citation>
    <scope>NUCLEOTIDE SEQUENCE [MRNA]</scope>
    <source>
        <strain>cv. Zhonghua 15</strain>
        <tissue>Flower</tissue>
    </source>
</reference>
<reference key="3">
    <citation type="journal article" date="2005" name="Nature">
        <title>The map-based sequence of the rice genome.</title>
        <authorList>
            <consortium name="International rice genome sequencing project (IRGSP)"/>
        </authorList>
    </citation>
    <scope>NUCLEOTIDE SEQUENCE [LARGE SCALE GENOMIC DNA]</scope>
    <source>
        <strain>cv. Nipponbare</strain>
    </source>
</reference>
<reference key="4">
    <citation type="journal article" date="2008" name="Nucleic Acids Res.">
        <title>The rice annotation project database (RAP-DB): 2008 update.</title>
        <authorList>
            <consortium name="The rice annotation project (RAP)"/>
        </authorList>
    </citation>
    <scope>GENOME REANNOTATION</scope>
    <source>
        <strain>cv. Nipponbare</strain>
    </source>
</reference>
<reference key="5">
    <citation type="journal article" date="2013" name="Rice">
        <title>Improvement of the Oryza sativa Nipponbare reference genome using next generation sequence and optical map data.</title>
        <authorList>
            <person name="Kawahara Y."/>
            <person name="de la Bastide M."/>
            <person name="Hamilton J.P."/>
            <person name="Kanamori H."/>
            <person name="McCombie W.R."/>
            <person name="Ouyang S."/>
            <person name="Schwartz D.C."/>
            <person name="Tanaka T."/>
            <person name="Wu J."/>
            <person name="Zhou S."/>
            <person name="Childs K.L."/>
            <person name="Davidson R.M."/>
            <person name="Lin H."/>
            <person name="Quesada-Ocampo L."/>
            <person name="Vaillancourt B."/>
            <person name="Sakai H."/>
            <person name="Lee S.S."/>
            <person name="Kim J."/>
            <person name="Numa H."/>
            <person name="Itoh T."/>
            <person name="Buell C.R."/>
            <person name="Matsumoto T."/>
        </authorList>
    </citation>
    <scope>GENOME REANNOTATION</scope>
    <source>
        <strain>cv. Nipponbare</strain>
    </source>
</reference>
<reference key="6">
    <citation type="journal article" date="2021" name="BMC Plant Biol.">
        <title>Hexokinase gene OsHXK1 positively regulates leaf senescence in rice.</title>
        <authorList>
            <person name="Zheng S."/>
            <person name="Lu J."/>
            <person name="Yu D."/>
            <person name="Li J."/>
            <person name="Zhou H."/>
            <person name="Jiang D."/>
            <person name="Liu Z."/>
            <person name="Zhuang C."/>
        </authorList>
    </citation>
    <scope>FUNCTION</scope>
    <scope>TISSUE SPECIFICITY</scope>
</reference>
<feature type="chain" id="PRO_0000247564" description="Hexokinase-1">
    <location>
        <begin position="1"/>
        <end position="498"/>
    </location>
</feature>
<feature type="domain" description="Hexokinase" evidence="2">
    <location>
        <begin position="39"/>
        <end position="492"/>
    </location>
</feature>
<feature type="region of interest" description="Hexokinase small subdomain" evidence="2">
    <location>
        <begin position="95"/>
        <end position="233"/>
    </location>
</feature>
<feature type="region of interest" description="Hexokinase large subdomain" evidence="2">
    <location>
        <begin position="234"/>
        <end position="481"/>
    </location>
</feature>
<feature type="binding site" evidence="1">
    <location>
        <position position="109"/>
    </location>
    <ligand>
        <name>ADP</name>
        <dbReference type="ChEBI" id="CHEBI:456216"/>
    </ligand>
</feature>
<feature type="binding site" evidence="1">
    <location>
        <position position="110"/>
    </location>
    <ligand>
        <name>ADP</name>
        <dbReference type="ChEBI" id="CHEBI:456216"/>
    </ligand>
</feature>
<feature type="binding site" evidence="1">
    <location>
        <position position="111"/>
    </location>
    <ligand>
        <name>ADP</name>
        <dbReference type="ChEBI" id="CHEBI:456216"/>
    </ligand>
</feature>
<feature type="binding site" evidence="1">
    <location>
        <position position="199"/>
    </location>
    <ligand>
        <name>D-glucose</name>
        <dbReference type="ChEBI" id="CHEBI:4167"/>
    </ligand>
</feature>
<feature type="binding site" evidence="1">
    <location>
        <position position="200"/>
    </location>
    <ligand>
        <name>D-glucose</name>
        <dbReference type="ChEBI" id="CHEBI:4167"/>
    </ligand>
</feature>
<feature type="binding site" evidence="1">
    <location>
        <position position="234"/>
    </location>
    <ligand>
        <name>D-glucose</name>
        <dbReference type="ChEBI" id="CHEBI:4167"/>
    </ligand>
</feature>
<feature type="binding site" evidence="1">
    <location>
        <position position="235"/>
    </location>
    <ligand>
        <name>D-glucose</name>
        <dbReference type="ChEBI" id="CHEBI:4167"/>
    </ligand>
</feature>
<feature type="binding site" evidence="1">
    <location>
        <position position="258"/>
    </location>
    <ligand>
        <name>ADP</name>
        <dbReference type="ChEBI" id="CHEBI:456216"/>
    </ligand>
</feature>
<feature type="binding site" evidence="1">
    <location>
        <position position="261"/>
    </location>
    <ligand>
        <name>D-glucose</name>
        <dbReference type="ChEBI" id="CHEBI:4167"/>
    </ligand>
</feature>
<feature type="binding site" evidence="1">
    <location>
        <position position="290"/>
    </location>
    <ligand>
        <name>D-glucose</name>
        <dbReference type="ChEBI" id="CHEBI:4167"/>
    </ligand>
</feature>
<feature type="binding site" evidence="1">
    <location>
        <position position="321"/>
    </location>
    <ligand>
        <name>D-glucose</name>
        <dbReference type="ChEBI" id="CHEBI:4167"/>
    </ligand>
</feature>
<feature type="binding site" evidence="1">
    <location>
        <position position="446"/>
    </location>
    <ligand>
        <name>ADP</name>
        <dbReference type="ChEBI" id="CHEBI:456216"/>
    </ligand>
</feature>
<dbReference type="EC" id="2.7.1.1" evidence="6"/>
<dbReference type="EMBL" id="DQ116383">
    <property type="protein sequence ID" value="AAZ93618.1"/>
    <property type="molecule type" value="mRNA"/>
</dbReference>
<dbReference type="EMBL" id="AY884164">
    <property type="protein sequence ID" value="AAX68417.1"/>
    <property type="molecule type" value="mRNA"/>
</dbReference>
<dbReference type="EMBL" id="AP004395">
    <property type="protein sequence ID" value="BAC10209.1"/>
    <property type="molecule type" value="Genomic_DNA"/>
</dbReference>
<dbReference type="EMBL" id="AP004668">
    <property type="protein sequence ID" value="BAC16101.1"/>
    <property type="molecule type" value="Genomic_DNA"/>
</dbReference>
<dbReference type="EMBL" id="AP008213">
    <property type="protein sequence ID" value="BAF21452.1"/>
    <property type="molecule type" value="Genomic_DNA"/>
</dbReference>
<dbReference type="EMBL" id="AP014963">
    <property type="protein sequence ID" value="BAT01294.1"/>
    <property type="molecule type" value="Genomic_DNA"/>
</dbReference>
<dbReference type="RefSeq" id="XP_015645221.1">
    <property type="nucleotide sequence ID" value="XM_015789735.1"/>
</dbReference>
<dbReference type="SMR" id="Q8LH82"/>
<dbReference type="FunCoup" id="Q8LH82">
    <property type="interactions" value="1396"/>
</dbReference>
<dbReference type="STRING" id="39947.Q8LH82"/>
<dbReference type="PaxDb" id="39947-Q8LH82"/>
<dbReference type="EnsemblPlants" id="Os07t0446800-01">
    <property type="protein sequence ID" value="Os07t0446800-01"/>
    <property type="gene ID" value="Os07g0446800"/>
</dbReference>
<dbReference type="Gramene" id="Os07t0446800-01">
    <property type="protein sequence ID" value="Os07t0446800-01"/>
    <property type="gene ID" value="Os07g0446800"/>
</dbReference>
<dbReference type="KEGG" id="dosa:Os07g0446800"/>
<dbReference type="eggNOG" id="KOG1369">
    <property type="taxonomic scope" value="Eukaryota"/>
</dbReference>
<dbReference type="HOGENOM" id="CLU_014393_5_1_1"/>
<dbReference type="InParanoid" id="Q8LH82"/>
<dbReference type="OMA" id="HYGKFRR"/>
<dbReference type="OrthoDB" id="419537at2759"/>
<dbReference type="BRENDA" id="2.7.1.1">
    <property type="organism ID" value="4460"/>
</dbReference>
<dbReference type="UniPathway" id="UPA00109">
    <property type="reaction ID" value="UER00180"/>
</dbReference>
<dbReference type="UniPathway" id="UPA00242"/>
<dbReference type="Proteomes" id="UP000000763">
    <property type="component" value="Chromosome 7"/>
</dbReference>
<dbReference type="Proteomes" id="UP000059680">
    <property type="component" value="Chromosome 7"/>
</dbReference>
<dbReference type="GO" id="GO:0005829">
    <property type="term" value="C:cytosol"/>
    <property type="evidence" value="ECO:0000318"/>
    <property type="project" value="GO_Central"/>
</dbReference>
<dbReference type="GO" id="GO:0005739">
    <property type="term" value="C:mitochondrion"/>
    <property type="evidence" value="ECO:0000318"/>
    <property type="project" value="GO_Central"/>
</dbReference>
<dbReference type="GO" id="GO:0005524">
    <property type="term" value="F:ATP binding"/>
    <property type="evidence" value="ECO:0007669"/>
    <property type="project" value="UniProtKB-KW"/>
</dbReference>
<dbReference type="GO" id="GO:0005536">
    <property type="term" value="F:D-glucose binding"/>
    <property type="evidence" value="ECO:0007669"/>
    <property type="project" value="InterPro"/>
</dbReference>
<dbReference type="GO" id="GO:0008865">
    <property type="term" value="F:fructokinase activity"/>
    <property type="evidence" value="ECO:0000318"/>
    <property type="project" value="GO_Central"/>
</dbReference>
<dbReference type="GO" id="GO:0004340">
    <property type="term" value="F:glucokinase activity"/>
    <property type="evidence" value="ECO:0000318"/>
    <property type="project" value="GO_Central"/>
</dbReference>
<dbReference type="GO" id="GO:0051156">
    <property type="term" value="P:glucose 6-phosphate metabolic process"/>
    <property type="evidence" value="ECO:0000318"/>
    <property type="project" value="GO_Central"/>
</dbReference>
<dbReference type="GO" id="GO:0006006">
    <property type="term" value="P:glucose metabolic process"/>
    <property type="evidence" value="ECO:0000318"/>
    <property type="project" value="GO_Central"/>
</dbReference>
<dbReference type="GO" id="GO:0006096">
    <property type="term" value="P:glycolytic process"/>
    <property type="evidence" value="ECO:0000318"/>
    <property type="project" value="GO_Central"/>
</dbReference>
<dbReference type="GO" id="GO:0001678">
    <property type="term" value="P:intracellular glucose homeostasis"/>
    <property type="evidence" value="ECO:0000318"/>
    <property type="project" value="GO_Central"/>
</dbReference>
<dbReference type="FunFam" id="3.30.420.40:FF:000034">
    <property type="entry name" value="Phosphotransferase"/>
    <property type="match status" value="1"/>
</dbReference>
<dbReference type="FunFam" id="3.40.367.20:FF:000003">
    <property type="entry name" value="Phosphotransferase"/>
    <property type="match status" value="1"/>
</dbReference>
<dbReference type="Gene3D" id="3.30.420.40">
    <property type="match status" value="1"/>
</dbReference>
<dbReference type="Gene3D" id="3.40.367.20">
    <property type="match status" value="1"/>
</dbReference>
<dbReference type="InterPro" id="IPR043129">
    <property type="entry name" value="ATPase_NBD"/>
</dbReference>
<dbReference type="InterPro" id="IPR001312">
    <property type="entry name" value="Hexokinase"/>
</dbReference>
<dbReference type="InterPro" id="IPR022673">
    <property type="entry name" value="Hexokinase_C"/>
</dbReference>
<dbReference type="InterPro" id="IPR022672">
    <property type="entry name" value="Hexokinase_N"/>
</dbReference>
<dbReference type="PANTHER" id="PTHR19443">
    <property type="entry name" value="HEXOKINASE"/>
    <property type="match status" value="1"/>
</dbReference>
<dbReference type="PANTHER" id="PTHR19443:SF87">
    <property type="entry name" value="HEXOKINASE-7"/>
    <property type="match status" value="1"/>
</dbReference>
<dbReference type="Pfam" id="PF00349">
    <property type="entry name" value="Hexokinase_1"/>
    <property type="match status" value="1"/>
</dbReference>
<dbReference type="Pfam" id="PF03727">
    <property type="entry name" value="Hexokinase_2"/>
    <property type="match status" value="1"/>
</dbReference>
<dbReference type="PRINTS" id="PR00475">
    <property type="entry name" value="HEXOKINASE"/>
</dbReference>
<dbReference type="SUPFAM" id="SSF53067">
    <property type="entry name" value="Actin-like ATPase domain"/>
    <property type="match status" value="2"/>
</dbReference>
<dbReference type="PROSITE" id="PS51748">
    <property type="entry name" value="HEXOKINASE_2"/>
    <property type="match status" value="1"/>
</dbReference>
<proteinExistence type="evidence at protein level"/>
<comment type="function">
    <text evidence="3 4">Fructose and glucose phosphorylating enzyme (PubMed:16552590). Acts as a positive regulator of leaf senescence by mediating glucose accumulation and inducing an increase in reactive oxygen species (ROS) (PubMed:34879830).</text>
</comment>
<comment type="catalytic activity">
    <reaction evidence="6">
        <text>a D-hexose + ATP = a D-hexose 6-phosphate + ADP + H(+)</text>
        <dbReference type="Rhea" id="RHEA:22740"/>
        <dbReference type="ChEBI" id="CHEBI:4194"/>
        <dbReference type="ChEBI" id="CHEBI:15378"/>
        <dbReference type="ChEBI" id="CHEBI:30616"/>
        <dbReference type="ChEBI" id="CHEBI:229467"/>
        <dbReference type="ChEBI" id="CHEBI:456216"/>
        <dbReference type="EC" id="2.7.1.1"/>
    </reaction>
    <physiologicalReaction direction="left-to-right" evidence="6">
        <dbReference type="Rhea" id="RHEA:22741"/>
    </physiologicalReaction>
</comment>
<comment type="catalytic activity">
    <reaction evidence="6">
        <text>D-fructose + ATP = D-fructose 6-phosphate + ADP + H(+)</text>
        <dbReference type="Rhea" id="RHEA:16125"/>
        <dbReference type="ChEBI" id="CHEBI:15378"/>
        <dbReference type="ChEBI" id="CHEBI:30616"/>
        <dbReference type="ChEBI" id="CHEBI:37721"/>
        <dbReference type="ChEBI" id="CHEBI:61527"/>
        <dbReference type="ChEBI" id="CHEBI:456216"/>
        <dbReference type="EC" id="2.7.1.1"/>
    </reaction>
    <physiologicalReaction direction="left-to-right" evidence="6">
        <dbReference type="Rhea" id="RHEA:16126"/>
    </physiologicalReaction>
</comment>
<comment type="catalytic activity">
    <reaction evidence="6">
        <text>D-glucose + ATP = D-glucose 6-phosphate + ADP + H(+)</text>
        <dbReference type="Rhea" id="RHEA:17825"/>
        <dbReference type="ChEBI" id="CHEBI:4167"/>
        <dbReference type="ChEBI" id="CHEBI:15378"/>
        <dbReference type="ChEBI" id="CHEBI:30616"/>
        <dbReference type="ChEBI" id="CHEBI:61548"/>
        <dbReference type="ChEBI" id="CHEBI:456216"/>
        <dbReference type="EC" id="2.7.1.1"/>
    </reaction>
    <physiologicalReaction direction="left-to-right" evidence="6">
        <dbReference type="Rhea" id="RHEA:17826"/>
    </physiologicalReaction>
</comment>
<comment type="pathway">
    <text evidence="6">Carbohydrate metabolism; hexose metabolism.</text>
</comment>
<comment type="pathway">
    <text evidence="6">Carbohydrate degradation; glycolysis; D-glyceraldehyde 3-phosphate and glycerone phosphate from D-glucose: step 1/4.</text>
</comment>
<comment type="tissue specificity">
    <text evidence="4">Highly expressed in senescent leaves.</text>
</comment>
<comment type="miscellaneous">
    <text evidence="4">Plants over-expressing HXK1 exhibit early leaf senescence phenotype.</text>
</comment>
<comment type="similarity">
    <text evidence="2 5">Belongs to the hexokinase family.</text>
</comment>
<protein>
    <recommendedName>
        <fullName>Hexokinase-1</fullName>
        <ecNumber evidence="6">2.7.1.1</ecNumber>
    </recommendedName>
</protein>
<evidence type="ECO:0000250" key="1">
    <source>
        <dbReference type="UniProtKB" id="Q8LQ68"/>
    </source>
</evidence>
<evidence type="ECO:0000255" key="2">
    <source>
        <dbReference type="PROSITE-ProRule" id="PRU01084"/>
    </source>
</evidence>
<evidence type="ECO:0000269" key="3">
    <source>
    </source>
</evidence>
<evidence type="ECO:0000269" key="4">
    <source>
    </source>
</evidence>
<evidence type="ECO:0000305" key="5"/>
<evidence type="ECO:0000305" key="6">
    <source>
    </source>
</evidence>
<name>HXK1_ORYSJ</name>
<sequence length="498" mass="51772">MAAAAVAADQKVVTMTSLREGCACAAPPAAAAPPMPKMAAAQRVVAELREACATPAARLAEVAAAMAGEMEAGLAVEGGSSEMKMIVSYVDSLPTGGEEGSYYALDLGGTNFRVLRVRLAGGGVAERVAREVPIPPGLMSGGGATSECLFGFIASALAEFVGEEEEEGGLDGGERELGFTFSFPVHQTSIASGTLIRWTKAFAVDDAIGEDVVAALQAAMSERGLDMRVSALINDTVGTLAAGSYYDEDVVAAVILGTGTNAAYVEDATAIAKLHPSQLPASNTMVINTEWGSFASPCLPLTEFDEALDQESLNPGEQTYEKLISGMYLGEIVRRVLLKISSRCPSLLGGAGELATPFVLRTPDVSAMHHDETPDLSIVGEKLERTLGIRGTSPEARRMVVEVCDIVATRAARLAAAGIVGILKKIGRVDGGEGRRRRSVVAVDGGLFEHYGKFRRCMESAVRELLGEAAAERVVVKLASDGSGLGAALVAAAHSQRA</sequence>
<keyword id="KW-0067">ATP-binding</keyword>
<keyword id="KW-0324">Glycolysis</keyword>
<keyword id="KW-0418">Kinase</keyword>
<keyword id="KW-0547">Nucleotide-binding</keyword>
<keyword id="KW-1185">Reference proteome</keyword>
<keyword id="KW-0808">Transferase</keyword>